<sequence length="238" mass="26402">MKFSPSLLRGTLIKRYKRFFADVELEDGTIVTAHCPNTGAMSGCAEPGYTVFLSESTNPKRKLKYTWELAQTFDGHFIGINTHNANKLVAEALDNKVLKEFSDITRWKAEVTPPTANSRFDFALERENTQHQGIIEYMEVKSVTLAENSKGFFPDAVTQRGAKHCLELARLAESGIKTSLLFCVQHTAIESVQVAEYIDPTYAESVKKAADAGVSLLAASCIIDEQKILLNQTLPLIL</sequence>
<dbReference type="EMBL" id="CP001103">
    <property type="protein sequence ID" value="AEA99628.1"/>
    <property type="molecule type" value="Genomic_DNA"/>
</dbReference>
<dbReference type="EMBL" id="CP001103">
    <property type="protein sequence ID" value="AEA99807.1"/>
    <property type="molecule type" value="Genomic_DNA"/>
</dbReference>
<dbReference type="RefSeq" id="WP_012519850.1">
    <property type="nucleotide sequence ID" value="NC_011138.3"/>
</dbReference>
<dbReference type="SMR" id="B4RYN2"/>
<dbReference type="KEGG" id="amc:MADE_1018415"/>
<dbReference type="HOGENOM" id="CLU_052299_2_0_6"/>
<dbReference type="Proteomes" id="UP000001870">
    <property type="component" value="Chromosome"/>
</dbReference>
<dbReference type="GO" id="GO:0003677">
    <property type="term" value="F:DNA binding"/>
    <property type="evidence" value="ECO:0007669"/>
    <property type="project" value="InterPro"/>
</dbReference>
<dbReference type="CDD" id="cd22359">
    <property type="entry name" value="SfsA-like_bacterial"/>
    <property type="match status" value="1"/>
</dbReference>
<dbReference type="FunFam" id="2.40.50.580:FF:000001">
    <property type="entry name" value="Sugar fermentation stimulation protein A"/>
    <property type="match status" value="1"/>
</dbReference>
<dbReference type="Gene3D" id="2.40.50.580">
    <property type="match status" value="1"/>
</dbReference>
<dbReference type="Gene3D" id="3.40.1350.60">
    <property type="match status" value="1"/>
</dbReference>
<dbReference type="HAMAP" id="MF_00095">
    <property type="entry name" value="SfsA"/>
    <property type="match status" value="1"/>
</dbReference>
<dbReference type="InterPro" id="IPR005224">
    <property type="entry name" value="SfsA"/>
</dbReference>
<dbReference type="InterPro" id="IPR040452">
    <property type="entry name" value="SfsA_C"/>
</dbReference>
<dbReference type="InterPro" id="IPR041465">
    <property type="entry name" value="SfsA_N"/>
</dbReference>
<dbReference type="NCBIfam" id="TIGR00230">
    <property type="entry name" value="sfsA"/>
    <property type="match status" value="1"/>
</dbReference>
<dbReference type="PANTHER" id="PTHR30545">
    <property type="entry name" value="SUGAR FERMENTATION STIMULATION PROTEIN A"/>
    <property type="match status" value="1"/>
</dbReference>
<dbReference type="PANTHER" id="PTHR30545:SF2">
    <property type="entry name" value="SUGAR FERMENTATION STIMULATION PROTEIN A"/>
    <property type="match status" value="1"/>
</dbReference>
<dbReference type="Pfam" id="PF03749">
    <property type="entry name" value="SfsA"/>
    <property type="match status" value="1"/>
</dbReference>
<dbReference type="Pfam" id="PF17746">
    <property type="entry name" value="SfsA_N"/>
    <property type="match status" value="1"/>
</dbReference>
<gene>
    <name evidence="1" type="primary">sfsA1</name>
    <name type="ordered locus">MADE_1017520</name>
</gene>
<gene>
    <name evidence="1" type="primary">sfsA2</name>
    <name type="ordered locus">MADE_1018415</name>
</gene>
<proteinExistence type="inferred from homology"/>
<name>SFSA_ALTMD</name>
<accession>B4RYN2</accession>
<accession>F2G689</accession>
<comment type="similarity">
    <text evidence="1">Belongs to the SfsA family.</text>
</comment>
<evidence type="ECO:0000255" key="1">
    <source>
        <dbReference type="HAMAP-Rule" id="MF_00095"/>
    </source>
</evidence>
<protein>
    <recommendedName>
        <fullName evidence="1">Sugar fermentation stimulation protein homolog</fullName>
    </recommendedName>
</protein>
<reference key="1">
    <citation type="journal article" date="2008" name="ISME J.">
        <title>Comparative genomics of two ecotypes of the marine planktonic copiotroph Alteromonas macleodii suggests alternative lifestyles associated with different kinds of particulate organic matter.</title>
        <authorList>
            <person name="Ivars-Martinez E."/>
            <person name="Martin-Cuadrado A.-B."/>
            <person name="D'Auria G."/>
            <person name="Mira A."/>
            <person name="Ferriera S."/>
            <person name="Johnson J."/>
            <person name="Friedman R."/>
            <person name="Rodriguez-Valera F."/>
        </authorList>
    </citation>
    <scope>NUCLEOTIDE SEQUENCE [LARGE SCALE GENOMIC DNA]</scope>
    <source>
        <strain>DSM 17117 / CIP 110805 / LMG 28347 / Deep ecotype</strain>
    </source>
</reference>
<feature type="chain" id="PRO_1000093565" description="Sugar fermentation stimulation protein homolog">
    <location>
        <begin position="1"/>
        <end position="238"/>
    </location>
</feature>
<organism>
    <name type="scientific">Alteromonas mediterranea (strain DSM 17117 / CIP 110805 / LMG 28347 / Deep ecotype)</name>
    <dbReference type="NCBI Taxonomy" id="1774373"/>
    <lineage>
        <taxon>Bacteria</taxon>
        <taxon>Pseudomonadati</taxon>
        <taxon>Pseudomonadota</taxon>
        <taxon>Gammaproteobacteria</taxon>
        <taxon>Alteromonadales</taxon>
        <taxon>Alteromonadaceae</taxon>
        <taxon>Alteromonas/Salinimonas group</taxon>
        <taxon>Alteromonas</taxon>
    </lineage>
</organism>